<gene>
    <name evidence="1" type="primary">bamA</name>
    <name type="synonym">yaeT</name>
    <name type="ordered locus">Ent638_0715</name>
</gene>
<comment type="function">
    <text evidence="1">Part of the outer membrane protein assembly complex, which is involved in assembly and insertion of beta-barrel proteins into the outer membrane. Constitutes, with BamD, the core component of the assembly machinery.</text>
</comment>
<comment type="subunit">
    <text evidence="1">Part of the Bam complex, which is composed of the outer membrane protein BamA, and four lipoproteins BamB, BamC, BamD and BamE.</text>
</comment>
<comment type="subcellular location">
    <subcellularLocation>
        <location evidence="1">Cell outer membrane</location>
    </subcellularLocation>
</comment>
<comment type="similarity">
    <text evidence="1">Belongs to the BamA family.</text>
</comment>
<dbReference type="EMBL" id="CP000653">
    <property type="protein sequence ID" value="ABP59402.1"/>
    <property type="molecule type" value="Genomic_DNA"/>
</dbReference>
<dbReference type="RefSeq" id="WP_012016123.1">
    <property type="nucleotide sequence ID" value="NC_009436.1"/>
</dbReference>
<dbReference type="SMR" id="A4W6S2"/>
<dbReference type="STRING" id="399742.Ent638_0715"/>
<dbReference type="KEGG" id="ent:Ent638_0715"/>
<dbReference type="eggNOG" id="COG4775">
    <property type="taxonomic scope" value="Bacteria"/>
</dbReference>
<dbReference type="HOGENOM" id="CLU_007664_1_0_6"/>
<dbReference type="OrthoDB" id="9803054at2"/>
<dbReference type="Proteomes" id="UP000000230">
    <property type="component" value="Chromosome"/>
</dbReference>
<dbReference type="GO" id="GO:1990063">
    <property type="term" value="C:Bam protein complex"/>
    <property type="evidence" value="ECO:0007669"/>
    <property type="project" value="TreeGrafter"/>
</dbReference>
<dbReference type="GO" id="GO:0043165">
    <property type="term" value="P:Gram-negative-bacterium-type cell outer membrane assembly"/>
    <property type="evidence" value="ECO:0007669"/>
    <property type="project" value="UniProtKB-UniRule"/>
</dbReference>
<dbReference type="GO" id="GO:0051205">
    <property type="term" value="P:protein insertion into membrane"/>
    <property type="evidence" value="ECO:0007669"/>
    <property type="project" value="UniProtKB-UniRule"/>
</dbReference>
<dbReference type="FunFam" id="2.40.160.50:FF:000001">
    <property type="entry name" value="Outer membrane protein assembly factor BamA"/>
    <property type="match status" value="1"/>
</dbReference>
<dbReference type="FunFam" id="3.10.20.310:FF:000001">
    <property type="entry name" value="Outer membrane protein assembly factor BamA"/>
    <property type="match status" value="1"/>
</dbReference>
<dbReference type="FunFam" id="3.10.20.310:FF:000002">
    <property type="entry name" value="Outer membrane protein assembly factor BamA"/>
    <property type="match status" value="1"/>
</dbReference>
<dbReference type="FunFam" id="3.10.20.310:FF:000003">
    <property type="entry name" value="Outer membrane protein assembly factor BamA"/>
    <property type="match status" value="1"/>
</dbReference>
<dbReference type="FunFam" id="3.10.20.310:FF:000004">
    <property type="entry name" value="Outer membrane protein assembly factor BamA"/>
    <property type="match status" value="1"/>
</dbReference>
<dbReference type="FunFam" id="3.10.20.310:FF:000005">
    <property type="entry name" value="Outer membrane protein assembly factor BamA"/>
    <property type="match status" value="1"/>
</dbReference>
<dbReference type="Gene3D" id="3.10.20.310">
    <property type="entry name" value="membrane protein fhac"/>
    <property type="match status" value="5"/>
</dbReference>
<dbReference type="Gene3D" id="2.40.160.50">
    <property type="entry name" value="membrane protein fhac: a member of the omp85/tpsb transporter family"/>
    <property type="match status" value="1"/>
</dbReference>
<dbReference type="HAMAP" id="MF_01430">
    <property type="entry name" value="OM_assembly_BamA"/>
    <property type="match status" value="1"/>
</dbReference>
<dbReference type="InterPro" id="IPR000184">
    <property type="entry name" value="Bac_surfAg_D15"/>
</dbReference>
<dbReference type="InterPro" id="IPR010827">
    <property type="entry name" value="BamA/TamA_POTRA"/>
</dbReference>
<dbReference type="InterPro" id="IPR039910">
    <property type="entry name" value="D15-like"/>
</dbReference>
<dbReference type="InterPro" id="IPR023707">
    <property type="entry name" value="OM_assembly_BamA"/>
</dbReference>
<dbReference type="InterPro" id="IPR034746">
    <property type="entry name" value="POTRA"/>
</dbReference>
<dbReference type="NCBIfam" id="TIGR03303">
    <property type="entry name" value="OM_YaeT"/>
    <property type="match status" value="1"/>
</dbReference>
<dbReference type="NCBIfam" id="NF008287">
    <property type="entry name" value="PRK11067.1"/>
    <property type="match status" value="1"/>
</dbReference>
<dbReference type="PANTHER" id="PTHR12815:SF23">
    <property type="entry name" value="OUTER MEMBRANE PROTEIN ASSEMBLY FACTOR BAMA"/>
    <property type="match status" value="1"/>
</dbReference>
<dbReference type="PANTHER" id="PTHR12815">
    <property type="entry name" value="SORTING AND ASSEMBLY MACHINERY SAMM50 PROTEIN FAMILY MEMBER"/>
    <property type="match status" value="1"/>
</dbReference>
<dbReference type="Pfam" id="PF01103">
    <property type="entry name" value="Omp85"/>
    <property type="match status" value="1"/>
</dbReference>
<dbReference type="Pfam" id="PF07244">
    <property type="entry name" value="POTRA"/>
    <property type="match status" value="4"/>
</dbReference>
<dbReference type="PIRSF" id="PIRSF006076">
    <property type="entry name" value="OM_assembly_OMP85"/>
    <property type="match status" value="1"/>
</dbReference>
<dbReference type="PROSITE" id="PS51779">
    <property type="entry name" value="POTRA"/>
    <property type="match status" value="5"/>
</dbReference>
<accession>A4W6S2</accession>
<evidence type="ECO:0000255" key="1">
    <source>
        <dbReference type="HAMAP-Rule" id="MF_01430"/>
    </source>
</evidence>
<evidence type="ECO:0000255" key="2">
    <source>
        <dbReference type="PROSITE-ProRule" id="PRU01115"/>
    </source>
</evidence>
<feature type="signal peptide" evidence="1">
    <location>
        <begin position="1"/>
        <end position="20"/>
    </location>
</feature>
<feature type="chain" id="PRO_5000237653" description="Outer membrane protein assembly factor BamA">
    <location>
        <begin position="21"/>
        <end position="805"/>
    </location>
</feature>
<feature type="domain" description="POTRA 1" evidence="2">
    <location>
        <begin position="24"/>
        <end position="91"/>
    </location>
</feature>
<feature type="domain" description="POTRA 2" evidence="2">
    <location>
        <begin position="92"/>
        <end position="172"/>
    </location>
</feature>
<feature type="domain" description="POTRA 3" evidence="2">
    <location>
        <begin position="175"/>
        <end position="263"/>
    </location>
</feature>
<feature type="domain" description="POTRA 4" evidence="2">
    <location>
        <begin position="266"/>
        <end position="344"/>
    </location>
</feature>
<feature type="domain" description="POTRA 5" evidence="2">
    <location>
        <begin position="347"/>
        <end position="421"/>
    </location>
</feature>
<sequence length="805" mass="89305">MAMKKLLIASLLFSSATVYGAEGFVVKDIHFEGLQRVAVGAALLSMPVRQGDTVNDEDISNTIRALFATGNFEDVRVLRDGDTLLVQVKERPTIASITFSGNKSVKDDMLKQNLEASGVRVGESLDRTTLSDIEKGLEDFYYSVGKYSASVKAVVTPLPRNRVDLKLVFQEGVSAKIQQINIVGNHAFTTDELISTFQLRDEVPWWNVVGDRKYQKQKLAGDLETLRSYYLDRGYARFNIDSTQVSLTPDKKGIYITVNITEGDQYKLSGVEVSGNLAGHSAEIESLTKLQPGELYSGAKVTKMEDGIKKLLGRYGYAYPRVQTQPEINDTDKTVKLRVNVDAGNRFYVRKIRFEGNDTSKDSVLRREMRQMEGAWLGSDLVDQGKERLNRLGYFETVDTDTQRVAGSPDQVDVVYKVKERNTGSFNFGVGYGTESGVSFQVGVQQDNWLGTGYSVGINGTKNDYQTYSEFSVTNPYFTVDGVSLGGRIFYNDFKADDADLSSYTNKSYGLDGTLGFPINEYNTLRAGLGYVHNDLSNMQPQVAMWRYLDSIGQAASKSSDNNGFAADDFTFNYGWTYNRLDRGFFPTEGSRVNLNGKVTVPGSDNEFYKLTLDTASYFPIDDDHKWVVLGRTRWGYGDGLGGKELPFYENFYAGGSSTVRGFQSNNIGPKAVYYGGNDKDNCNKTSSSEVCSSDDAVGGNAMGVASLEIITPTPFISDKYANSVRTSFFWDAGTVWDTNWENTAQMKAAGVPDYSDPSNIRMSAGIALQWMSPLGPLVFSYAQPFKKYDGDKAEQFQFNIGKTW</sequence>
<proteinExistence type="inferred from homology"/>
<reference key="1">
    <citation type="journal article" date="2010" name="PLoS Genet.">
        <title>Genome sequence of the plant growth promoting endophytic bacterium Enterobacter sp. 638.</title>
        <authorList>
            <person name="Taghavi S."/>
            <person name="van der Lelie D."/>
            <person name="Hoffman A."/>
            <person name="Zhang Y.B."/>
            <person name="Walla M.D."/>
            <person name="Vangronsveld J."/>
            <person name="Newman L."/>
            <person name="Monchy S."/>
        </authorList>
    </citation>
    <scope>NUCLEOTIDE SEQUENCE [LARGE SCALE GENOMIC DNA]</scope>
    <source>
        <strain>638</strain>
    </source>
</reference>
<protein>
    <recommendedName>
        <fullName evidence="1">Outer membrane protein assembly factor BamA</fullName>
    </recommendedName>
</protein>
<keyword id="KW-0998">Cell outer membrane</keyword>
<keyword id="KW-0472">Membrane</keyword>
<keyword id="KW-0677">Repeat</keyword>
<keyword id="KW-0732">Signal</keyword>
<keyword id="KW-0812">Transmembrane</keyword>
<keyword id="KW-1134">Transmembrane beta strand</keyword>
<organism>
    <name type="scientific">Enterobacter sp. (strain 638)</name>
    <dbReference type="NCBI Taxonomy" id="399742"/>
    <lineage>
        <taxon>Bacteria</taxon>
        <taxon>Pseudomonadati</taxon>
        <taxon>Pseudomonadota</taxon>
        <taxon>Gammaproteobacteria</taxon>
        <taxon>Enterobacterales</taxon>
        <taxon>Enterobacteriaceae</taxon>
        <taxon>Enterobacter</taxon>
    </lineage>
</organism>
<name>BAMA_ENT38</name>